<proteinExistence type="inferred from homology"/>
<organism>
    <name type="scientific">Campylobacter lari (strain RM2100 / D67 / ATCC BAA-1060)</name>
    <dbReference type="NCBI Taxonomy" id="306263"/>
    <lineage>
        <taxon>Bacteria</taxon>
        <taxon>Pseudomonadati</taxon>
        <taxon>Campylobacterota</taxon>
        <taxon>Epsilonproteobacteria</taxon>
        <taxon>Campylobacterales</taxon>
        <taxon>Campylobacteraceae</taxon>
        <taxon>Campylobacter</taxon>
    </lineage>
</organism>
<accession>B9KDF4</accession>
<dbReference type="EC" id="3.6.4.-" evidence="1"/>
<dbReference type="EMBL" id="CP000932">
    <property type="protein sequence ID" value="ACM64592.1"/>
    <property type="molecule type" value="Genomic_DNA"/>
</dbReference>
<dbReference type="RefSeq" id="WP_012661975.1">
    <property type="nucleotide sequence ID" value="NC_012039.1"/>
</dbReference>
<dbReference type="SMR" id="B9KDF4"/>
<dbReference type="STRING" id="306263.Cla_1275"/>
<dbReference type="KEGG" id="cla:CLA_1275"/>
<dbReference type="PATRIC" id="fig|306263.5.peg.1259"/>
<dbReference type="eggNOG" id="COG2255">
    <property type="taxonomic scope" value="Bacteria"/>
</dbReference>
<dbReference type="HOGENOM" id="CLU_055599_1_0_7"/>
<dbReference type="Proteomes" id="UP000007727">
    <property type="component" value="Chromosome"/>
</dbReference>
<dbReference type="GO" id="GO:0005737">
    <property type="term" value="C:cytoplasm"/>
    <property type="evidence" value="ECO:0007669"/>
    <property type="project" value="UniProtKB-SubCell"/>
</dbReference>
<dbReference type="GO" id="GO:0048476">
    <property type="term" value="C:Holliday junction resolvase complex"/>
    <property type="evidence" value="ECO:0007669"/>
    <property type="project" value="UniProtKB-UniRule"/>
</dbReference>
<dbReference type="GO" id="GO:0005524">
    <property type="term" value="F:ATP binding"/>
    <property type="evidence" value="ECO:0007669"/>
    <property type="project" value="UniProtKB-UniRule"/>
</dbReference>
<dbReference type="GO" id="GO:0016887">
    <property type="term" value="F:ATP hydrolysis activity"/>
    <property type="evidence" value="ECO:0007669"/>
    <property type="project" value="InterPro"/>
</dbReference>
<dbReference type="GO" id="GO:0000400">
    <property type="term" value="F:four-way junction DNA binding"/>
    <property type="evidence" value="ECO:0007669"/>
    <property type="project" value="UniProtKB-UniRule"/>
</dbReference>
<dbReference type="GO" id="GO:0009378">
    <property type="term" value="F:four-way junction helicase activity"/>
    <property type="evidence" value="ECO:0007669"/>
    <property type="project" value="InterPro"/>
</dbReference>
<dbReference type="GO" id="GO:0006310">
    <property type="term" value="P:DNA recombination"/>
    <property type="evidence" value="ECO:0007669"/>
    <property type="project" value="UniProtKB-UniRule"/>
</dbReference>
<dbReference type="GO" id="GO:0006281">
    <property type="term" value="P:DNA repair"/>
    <property type="evidence" value="ECO:0007669"/>
    <property type="project" value="UniProtKB-UniRule"/>
</dbReference>
<dbReference type="CDD" id="cd00009">
    <property type="entry name" value="AAA"/>
    <property type="match status" value="1"/>
</dbReference>
<dbReference type="Gene3D" id="1.10.8.60">
    <property type="match status" value="1"/>
</dbReference>
<dbReference type="Gene3D" id="3.40.50.300">
    <property type="entry name" value="P-loop containing nucleotide triphosphate hydrolases"/>
    <property type="match status" value="1"/>
</dbReference>
<dbReference type="Gene3D" id="1.10.10.10">
    <property type="entry name" value="Winged helix-like DNA-binding domain superfamily/Winged helix DNA-binding domain"/>
    <property type="match status" value="1"/>
</dbReference>
<dbReference type="HAMAP" id="MF_00016">
    <property type="entry name" value="DNA_HJ_migration_RuvB"/>
    <property type="match status" value="1"/>
</dbReference>
<dbReference type="InterPro" id="IPR003593">
    <property type="entry name" value="AAA+_ATPase"/>
</dbReference>
<dbReference type="InterPro" id="IPR041445">
    <property type="entry name" value="AAA_lid_4"/>
</dbReference>
<dbReference type="InterPro" id="IPR004605">
    <property type="entry name" value="DNA_helicase_Holl-junc_RuvB"/>
</dbReference>
<dbReference type="InterPro" id="IPR027417">
    <property type="entry name" value="P-loop_NTPase"/>
</dbReference>
<dbReference type="InterPro" id="IPR008824">
    <property type="entry name" value="RuvB-like_N"/>
</dbReference>
<dbReference type="InterPro" id="IPR008823">
    <property type="entry name" value="RuvB_C"/>
</dbReference>
<dbReference type="InterPro" id="IPR036388">
    <property type="entry name" value="WH-like_DNA-bd_sf"/>
</dbReference>
<dbReference type="InterPro" id="IPR036390">
    <property type="entry name" value="WH_DNA-bd_sf"/>
</dbReference>
<dbReference type="NCBIfam" id="NF000868">
    <property type="entry name" value="PRK00080.1"/>
    <property type="match status" value="1"/>
</dbReference>
<dbReference type="NCBIfam" id="TIGR00635">
    <property type="entry name" value="ruvB"/>
    <property type="match status" value="1"/>
</dbReference>
<dbReference type="PANTHER" id="PTHR42848">
    <property type="match status" value="1"/>
</dbReference>
<dbReference type="PANTHER" id="PTHR42848:SF1">
    <property type="entry name" value="HOLLIDAY JUNCTION BRANCH MIGRATION COMPLEX SUBUNIT RUVB"/>
    <property type="match status" value="1"/>
</dbReference>
<dbReference type="Pfam" id="PF17864">
    <property type="entry name" value="AAA_lid_4"/>
    <property type="match status" value="1"/>
</dbReference>
<dbReference type="Pfam" id="PF05491">
    <property type="entry name" value="RuvB_C"/>
    <property type="match status" value="1"/>
</dbReference>
<dbReference type="Pfam" id="PF05496">
    <property type="entry name" value="RuvB_N"/>
    <property type="match status" value="1"/>
</dbReference>
<dbReference type="SMART" id="SM00382">
    <property type="entry name" value="AAA"/>
    <property type="match status" value="1"/>
</dbReference>
<dbReference type="SUPFAM" id="SSF52540">
    <property type="entry name" value="P-loop containing nucleoside triphosphate hydrolases"/>
    <property type="match status" value="1"/>
</dbReference>
<dbReference type="SUPFAM" id="SSF46785">
    <property type="entry name" value="Winged helix' DNA-binding domain"/>
    <property type="match status" value="1"/>
</dbReference>
<reference key="1">
    <citation type="journal article" date="2008" name="Foodborne Pathog. Dis.">
        <title>The complete genome sequence and analysis of the human pathogen Campylobacter lari.</title>
        <authorList>
            <person name="Miller W.G."/>
            <person name="Wang G."/>
            <person name="Binnewies T.T."/>
            <person name="Parker C.T."/>
        </authorList>
    </citation>
    <scope>NUCLEOTIDE SEQUENCE [LARGE SCALE GENOMIC DNA]</scope>
    <source>
        <strain>RM2100 / D67 / ATCC BAA-1060</strain>
    </source>
</reference>
<feature type="chain" id="PRO_1000195208" description="Holliday junction branch migration complex subunit RuvB">
    <location>
        <begin position="1"/>
        <end position="336"/>
    </location>
</feature>
<feature type="region of interest" description="Large ATPase domain (RuvB-L)" evidence="1">
    <location>
        <begin position="1"/>
        <end position="181"/>
    </location>
</feature>
<feature type="region of interest" description="Small ATPAse domain (RuvB-S)" evidence="1">
    <location>
        <begin position="182"/>
        <end position="252"/>
    </location>
</feature>
<feature type="region of interest" description="Head domain (RuvB-H)" evidence="1">
    <location>
        <begin position="255"/>
        <end position="336"/>
    </location>
</feature>
<feature type="binding site" evidence="1">
    <location>
        <position position="20"/>
    </location>
    <ligand>
        <name>ATP</name>
        <dbReference type="ChEBI" id="CHEBI:30616"/>
    </ligand>
</feature>
<feature type="binding site" evidence="1">
    <location>
        <position position="21"/>
    </location>
    <ligand>
        <name>ATP</name>
        <dbReference type="ChEBI" id="CHEBI:30616"/>
    </ligand>
</feature>
<feature type="binding site" evidence="1">
    <location>
        <position position="62"/>
    </location>
    <ligand>
        <name>ATP</name>
        <dbReference type="ChEBI" id="CHEBI:30616"/>
    </ligand>
</feature>
<feature type="binding site" evidence="1">
    <location>
        <position position="65"/>
    </location>
    <ligand>
        <name>ATP</name>
        <dbReference type="ChEBI" id="CHEBI:30616"/>
    </ligand>
</feature>
<feature type="binding site" evidence="1">
    <location>
        <position position="66"/>
    </location>
    <ligand>
        <name>ATP</name>
        <dbReference type="ChEBI" id="CHEBI:30616"/>
    </ligand>
</feature>
<feature type="binding site" evidence="1">
    <location>
        <position position="66"/>
    </location>
    <ligand>
        <name>Mg(2+)</name>
        <dbReference type="ChEBI" id="CHEBI:18420"/>
    </ligand>
</feature>
<feature type="binding site" evidence="1">
    <location>
        <position position="67"/>
    </location>
    <ligand>
        <name>ATP</name>
        <dbReference type="ChEBI" id="CHEBI:30616"/>
    </ligand>
</feature>
<feature type="binding site" evidence="1">
    <location>
        <begin position="128"/>
        <end position="130"/>
    </location>
    <ligand>
        <name>ATP</name>
        <dbReference type="ChEBI" id="CHEBI:30616"/>
    </ligand>
</feature>
<feature type="binding site" evidence="1">
    <location>
        <position position="171"/>
    </location>
    <ligand>
        <name>ATP</name>
        <dbReference type="ChEBI" id="CHEBI:30616"/>
    </ligand>
</feature>
<feature type="binding site" evidence="1">
    <location>
        <position position="181"/>
    </location>
    <ligand>
        <name>ATP</name>
        <dbReference type="ChEBI" id="CHEBI:30616"/>
    </ligand>
</feature>
<feature type="binding site" evidence="1">
    <location>
        <position position="218"/>
    </location>
    <ligand>
        <name>ATP</name>
        <dbReference type="ChEBI" id="CHEBI:30616"/>
    </ligand>
</feature>
<feature type="binding site" evidence="1">
    <location>
        <position position="309"/>
    </location>
    <ligand>
        <name>DNA</name>
        <dbReference type="ChEBI" id="CHEBI:16991"/>
    </ligand>
</feature>
<feature type="binding site" evidence="1">
    <location>
        <position position="314"/>
    </location>
    <ligand>
        <name>DNA</name>
        <dbReference type="ChEBI" id="CHEBI:16991"/>
    </ligand>
</feature>
<sequence length="336" mass="37651">MDRIVEIEKFSPDETYETSLRPSNFDGYIGQENIKKNLEIFIKAAKKRNECLDHILFSGPAGLGKTTLANIISYEMNANIKTTAAPMIEKSGDLAAILTNLSEGDILFIDEIHRLSPAIEEVLYPAMEDFRLDIIIGSGPAAQTIKIDLPKFTLIGATTRAGMLSNPLRDRFGMQFRLEFYKNEELAIILEKAALKLNKTCEKNAALEIAKRSRSTPRIALRLLKRVRDFADVNDEEIISEKRAKEALDSLGVNELGFDAMDLRYLELLTEAKRKPIGLSSIAAALSEDENTIEDVIEPYLLANGYIERTAKGRIASLKSFDVLKLKYNKGLFDEK</sequence>
<name>RUVB_CAMLR</name>
<gene>
    <name evidence="1" type="primary">ruvB</name>
    <name type="ordered locus">Cla_1275</name>
</gene>
<protein>
    <recommendedName>
        <fullName evidence="1">Holliday junction branch migration complex subunit RuvB</fullName>
        <ecNumber evidence="1">3.6.4.-</ecNumber>
    </recommendedName>
</protein>
<keyword id="KW-0067">ATP-binding</keyword>
<keyword id="KW-0963">Cytoplasm</keyword>
<keyword id="KW-0227">DNA damage</keyword>
<keyword id="KW-0233">DNA recombination</keyword>
<keyword id="KW-0234">DNA repair</keyword>
<keyword id="KW-0238">DNA-binding</keyword>
<keyword id="KW-0378">Hydrolase</keyword>
<keyword id="KW-0547">Nucleotide-binding</keyword>
<keyword id="KW-1185">Reference proteome</keyword>
<comment type="function">
    <text evidence="1">The RuvA-RuvB-RuvC complex processes Holliday junction (HJ) DNA during genetic recombination and DNA repair, while the RuvA-RuvB complex plays an important role in the rescue of blocked DNA replication forks via replication fork reversal (RFR). RuvA specifically binds to HJ cruciform DNA, conferring on it an open structure. The RuvB hexamer acts as an ATP-dependent pump, pulling dsDNA into and through the RuvAB complex. RuvB forms 2 homohexamers on either side of HJ DNA bound by 1 or 2 RuvA tetramers; 4 subunits per hexamer contact DNA at a time. Coordinated motions by a converter formed by DNA-disengaged RuvB subunits stimulates ATP hydrolysis and nucleotide exchange. Immobilization of the converter enables RuvB to convert the ATP-contained energy into a lever motion, pulling 2 nucleotides of DNA out of the RuvA tetramer per ATP hydrolyzed, thus driving DNA branch migration. The RuvB motors rotate together with the DNA substrate, which together with the progressing nucleotide cycle form the mechanistic basis for DNA recombination by continuous HJ branch migration. Branch migration allows RuvC to scan DNA until it finds its consensus sequence, where it cleaves and resolves cruciform DNA.</text>
</comment>
<comment type="catalytic activity">
    <reaction evidence="1">
        <text>ATP + H2O = ADP + phosphate + H(+)</text>
        <dbReference type="Rhea" id="RHEA:13065"/>
        <dbReference type="ChEBI" id="CHEBI:15377"/>
        <dbReference type="ChEBI" id="CHEBI:15378"/>
        <dbReference type="ChEBI" id="CHEBI:30616"/>
        <dbReference type="ChEBI" id="CHEBI:43474"/>
        <dbReference type="ChEBI" id="CHEBI:456216"/>
    </reaction>
</comment>
<comment type="subunit">
    <text evidence="1">Homohexamer. Forms an RuvA(8)-RuvB(12)-Holliday junction (HJ) complex. HJ DNA is sandwiched between 2 RuvA tetramers; dsDNA enters through RuvA and exits via RuvB. An RuvB hexamer assembles on each DNA strand where it exits the tetramer. Each RuvB hexamer is contacted by two RuvA subunits (via domain III) on 2 adjacent RuvB subunits; this complex drives branch migration. In the full resolvosome a probable DNA-RuvA(4)-RuvB(12)-RuvC(2) complex forms which resolves the HJ.</text>
</comment>
<comment type="subcellular location">
    <subcellularLocation>
        <location evidence="1">Cytoplasm</location>
    </subcellularLocation>
</comment>
<comment type="domain">
    <text evidence="1">Has 3 domains, the large (RuvB-L) and small ATPase (RuvB-S) domains and the C-terminal head (RuvB-H) domain. The head domain binds DNA, while the ATPase domains jointly bind ATP, ADP or are empty depending on the state of the subunit in the translocation cycle. During a single DNA translocation step the structure of each domain remains the same, but their relative positions change.</text>
</comment>
<comment type="similarity">
    <text evidence="1">Belongs to the RuvB family.</text>
</comment>
<evidence type="ECO:0000255" key="1">
    <source>
        <dbReference type="HAMAP-Rule" id="MF_00016"/>
    </source>
</evidence>